<accession>Q3ZJ78</accession>
<gene>
    <name evidence="1" type="primary">rps11</name>
</gene>
<sequence>MAKQIRKTNKKVKMTKLPKGVVHIQSTFNNTIVTITNLKGEVISWSSAGAVGFKGARKSTPFAAKTAAQTAARQSMDQGLKQAKVLVKGAGPGRETAIRGLIDSGLQITLIRDITAIPHNGCRPPKKRRV</sequence>
<protein>
    <recommendedName>
        <fullName evidence="1">Small ribosomal subunit protein uS11c</fullName>
    </recommendedName>
    <alternativeName>
        <fullName evidence="2">30S ribosomal protein S11, chloroplastic</fullName>
    </alternativeName>
</protein>
<dbReference type="EMBL" id="AY835431">
    <property type="protein sequence ID" value="AAV80613.1"/>
    <property type="molecule type" value="Genomic_DNA"/>
</dbReference>
<dbReference type="RefSeq" id="YP_636189.1">
    <property type="nucleotide sequence ID" value="NC_008114.1"/>
</dbReference>
<dbReference type="SMR" id="Q3ZJ78"/>
<dbReference type="GeneID" id="4108813"/>
<dbReference type="GO" id="GO:0009507">
    <property type="term" value="C:chloroplast"/>
    <property type="evidence" value="ECO:0007669"/>
    <property type="project" value="UniProtKB-SubCell"/>
</dbReference>
<dbReference type="GO" id="GO:1990904">
    <property type="term" value="C:ribonucleoprotein complex"/>
    <property type="evidence" value="ECO:0007669"/>
    <property type="project" value="UniProtKB-KW"/>
</dbReference>
<dbReference type="GO" id="GO:0005840">
    <property type="term" value="C:ribosome"/>
    <property type="evidence" value="ECO:0007669"/>
    <property type="project" value="UniProtKB-KW"/>
</dbReference>
<dbReference type="GO" id="GO:0019843">
    <property type="term" value="F:rRNA binding"/>
    <property type="evidence" value="ECO:0007669"/>
    <property type="project" value="UniProtKB-UniRule"/>
</dbReference>
<dbReference type="GO" id="GO:0003735">
    <property type="term" value="F:structural constituent of ribosome"/>
    <property type="evidence" value="ECO:0007669"/>
    <property type="project" value="InterPro"/>
</dbReference>
<dbReference type="GO" id="GO:0006412">
    <property type="term" value="P:translation"/>
    <property type="evidence" value="ECO:0007669"/>
    <property type="project" value="UniProtKB-UniRule"/>
</dbReference>
<dbReference type="FunFam" id="3.30.420.80:FF:000010">
    <property type="entry name" value="30S ribosomal protein S11"/>
    <property type="match status" value="1"/>
</dbReference>
<dbReference type="Gene3D" id="3.30.420.80">
    <property type="entry name" value="Ribosomal protein S11"/>
    <property type="match status" value="1"/>
</dbReference>
<dbReference type="HAMAP" id="MF_01310">
    <property type="entry name" value="Ribosomal_uS11"/>
    <property type="match status" value="1"/>
</dbReference>
<dbReference type="InterPro" id="IPR001971">
    <property type="entry name" value="Ribosomal_uS11"/>
</dbReference>
<dbReference type="InterPro" id="IPR019981">
    <property type="entry name" value="Ribosomal_uS11_bac-type"/>
</dbReference>
<dbReference type="InterPro" id="IPR036967">
    <property type="entry name" value="Ribosomal_uS11_sf"/>
</dbReference>
<dbReference type="NCBIfam" id="NF003698">
    <property type="entry name" value="PRK05309.1"/>
    <property type="match status" value="1"/>
</dbReference>
<dbReference type="NCBIfam" id="TIGR03632">
    <property type="entry name" value="uS11_bact"/>
    <property type="match status" value="1"/>
</dbReference>
<dbReference type="PANTHER" id="PTHR11759">
    <property type="entry name" value="40S RIBOSOMAL PROTEIN S14/30S RIBOSOMAL PROTEIN S11"/>
    <property type="match status" value="1"/>
</dbReference>
<dbReference type="Pfam" id="PF00411">
    <property type="entry name" value="Ribosomal_S11"/>
    <property type="match status" value="1"/>
</dbReference>
<dbReference type="PIRSF" id="PIRSF002131">
    <property type="entry name" value="Ribosomal_S11"/>
    <property type="match status" value="1"/>
</dbReference>
<dbReference type="SUPFAM" id="SSF53137">
    <property type="entry name" value="Translational machinery components"/>
    <property type="match status" value="1"/>
</dbReference>
<keyword id="KW-0150">Chloroplast</keyword>
<keyword id="KW-0934">Plastid</keyword>
<keyword id="KW-0687">Ribonucleoprotein</keyword>
<keyword id="KW-0689">Ribosomal protein</keyword>
<keyword id="KW-0694">RNA-binding</keyword>
<keyword id="KW-0699">rRNA-binding</keyword>
<name>RR11_TUPAK</name>
<reference key="1">
    <citation type="journal article" date="2005" name="Mol. Biol. Evol.">
        <title>The chloroplast genome sequence of the green alga Pseudendoclonium akinetum (Ulvophyceae) reveals unusual structural features and new insights into the branching order of chlorophyte lineages.</title>
        <authorList>
            <person name="Pombert J.-F."/>
            <person name="Otis C."/>
            <person name="Lemieux C."/>
            <person name="Turmel M."/>
        </authorList>
    </citation>
    <scope>NUCLEOTIDE SEQUENCE [LARGE SCALE GENOMIC DNA]</scope>
    <source>
        <strain>UTEX 1912</strain>
    </source>
</reference>
<comment type="subunit">
    <text evidence="1">Part of the 30S ribosomal subunit.</text>
</comment>
<comment type="subcellular location">
    <subcellularLocation>
        <location>Plastid</location>
        <location>Chloroplast</location>
    </subcellularLocation>
</comment>
<comment type="similarity">
    <text evidence="1">Belongs to the universal ribosomal protein uS11 family.</text>
</comment>
<feature type="chain" id="PRO_0000230456" description="Small ribosomal subunit protein uS11c">
    <location>
        <begin position="1"/>
        <end position="130"/>
    </location>
</feature>
<evidence type="ECO:0000255" key="1">
    <source>
        <dbReference type="HAMAP-Rule" id="MF_01310"/>
    </source>
</evidence>
<evidence type="ECO:0000305" key="2"/>
<geneLocation type="chloroplast"/>
<organism>
    <name type="scientific">Tupiella akineta</name>
    <name type="common">Green alga</name>
    <name type="synonym">Pseudendoclonium akinetum</name>
    <dbReference type="NCBI Taxonomy" id="160070"/>
    <lineage>
        <taxon>Eukaryota</taxon>
        <taxon>Viridiplantae</taxon>
        <taxon>Chlorophyta</taxon>
        <taxon>Ulvophyceae</taxon>
        <taxon>OUU clade</taxon>
        <taxon>Ulotrichales</taxon>
        <taxon>Tupiellaceae</taxon>
        <taxon>Tupiella</taxon>
    </lineage>
</organism>
<proteinExistence type="inferred from homology"/>